<keyword id="KW-0067">ATP-binding</keyword>
<keyword id="KW-0963">Cytoplasm</keyword>
<keyword id="KW-0227">DNA damage</keyword>
<keyword id="KW-0228">DNA excision</keyword>
<keyword id="KW-0234">DNA repair</keyword>
<keyword id="KW-0238">DNA-binding</keyword>
<keyword id="KW-0267">Excision nuclease</keyword>
<keyword id="KW-0479">Metal-binding</keyword>
<keyword id="KW-0547">Nucleotide-binding</keyword>
<keyword id="KW-0677">Repeat</keyword>
<keyword id="KW-0742">SOS response</keyword>
<keyword id="KW-0862">Zinc</keyword>
<keyword id="KW-0863">Zinc-finger</keyword>
<protein>
    <recommendedName>
        <fullName evidence="1">UvrABC system protein A</fullName>
        <shortName evidence="1">UvrA protein</shortName>
    </recommendedName>
    <alternativeName>
        <fullName evidence="1">Excinuclease ABC subunit A</fullName>
    </alternativeName>
</protein>
<evidence type="ECO:0000255" key="1">
    <source>
        <dbReference type="HAMAP-Rule" id="MF_00205"/>
    </source>
</evidence>
<proteinExistence type="inferred from homology"/>
<feature type="chain" id="PRO_0000093094" description="UvrABC system protein A">
    <location>
        <begin position="1"/>
        <end position="948"/>
    </location>
</feature>
<feature type="domain" description="ABC transporter 1" evidence="1">
    <location>
        <begin position="309"/>
        <end position="587"/>
    </location>
</feature>
<feature type="domain" description="ABC transporter 2" evidence="1">
    <location>
        <begin position="607"/>
        <end position="935"/>
    </location>
</feature>
<feature type="zinc finger region" description="C4-type" evidence="1">
    <location>
        <begin position="252"/>
        <end position="279"/>
    </location>
</feature>
<feature type="zinc finger region" description="C4-type" evidence="1">
    <location>
        <begin position="738"/>
        <end position="764"/>
    </location>
</feature>
<feature type="binding site" evidence="1">
    <location>
        <begin position="33"/>
        <end position="40"/>
    </location>
    <ligand>
        <name>ATP</name>
        <dbReference type="ChEBI" id="CHEBI:30616"/>
    </ligand>
</feature>
<feature type="binding site" evidence="1">
    <location>
        <begin position="639"/>
        <end position="646"/>
    </location>
    <ligand>
        <name>ATP</name>
        <dbReference type="ChEBI" id="CHEBI:30616"/>
    </ligand>
</feature>
<gene>
    <name evidence="1" type="primary">uvrA</name>
    <name type="ordered locus">MW0721</name>
</gene>
<accession>Q8NXL9</accession>
<dbReference type="EMBL" id="BA000033">
    <property type="protein sequence ID" value="BAB94586.1"/>
    <property type="molecule type" value="Genomic_DNA"/>
</dbReference>
<dbReference type="RefSeq" id="WP_000662681.1">
    <property type="nucleotide sequence ID" value="NC_003923.1"/>
</dbReference>
<dbReference type="SMR" id="Q8NXL9"/>
<dbReference type="KEGG" id="sam:MW0721"/>
<dbReference type="HOGENOM" id="CLU_001370_0_2_9"/>
<dbReference type="GO" id="GO:0005737">
    <property type="term" value="C:cytoplasm"/>
    <property type="evidence" value="ECO:0007669"/>
    <property type="project" value="UniProtKB-SubCell"/>
</dbReference>
<dbReference type="GO" id="GO:0009380">
    <property type="term" value="C:excinuclease repair complex"/>
    <property type="evidence" value="ECO:0007669"/>
    <property type="project" value="InterPro"/>
</dbReference>
<dbReference type="GO" id="GO:0005524">
    <property type="term" value="F:ATP binding"/>
    <property type="evidence" value="ECO:0007669"/>
    <property type="project" value="UniProtKB-UniRule"/>
</dbReference>
<dbReference type="GO" id="GO:0016887">
    <property type="term" value="F:ATP hydrolysis activity"/>
    <property type="evidence" value="ECO:0007669"/>
    <property type="project" value="InterPro"/>
</dbReference>
<dbReference type="GO" id="GO:0003677">
    <property type="term" value="F:DNA binding"/>
    <property type="evidence" value="ECO:0007669"/>
    <property type="project" value="UniProtKB-UniRule"/>
</dbReference>
<dbReference type="GO" id="GO:0009381">
    <property type="term" value="F:excinuclease ABC activity"/>
    <property type="evidence" value="ECO:0007669"/>
    <property type="project" value="UniProtKB-UniRule"/>
</dbReference>
<dbReference type="GO" id="GO:0008270">
    <property type="term" value="F:zinc ion binding"/>
    <property type="evidence" value="ECO:0007669"/>
    <property type="project" value="UniProtKB-UniRule"/>
</dbReference>
<dbReference type="GO" id="GO:0006289">
    <property type="term" value="P:nucleotide-excision repair"/>
    <property type="evidence" value="ECO:0007669"/>
    <property type="project" value="UniProtKB-UniRule"/>
</dbReference>
<dbReference type="GO" id="GO:0009432">
    <property type="term" value="P:SOS response"/>
    <property type="evidence" value="ECO:0007669"/>
    <property type="project" value="UniProtKB-UniRule"/>
</dbReference>
<dbReference type="CDD" id="cd03270">
    <property type="entry name" value="ABC_UvrA_I"/>
    <property type="match status" value="1"/>
</dbReference>
<dbReference type="CDD" id="cd03271">
    <property type="entry name" value="ABC_UvrA_II"/>
    <property type="match status" value="1"/>
</dbReference>
<dbReference type="FunFam" id="1.20.1580.10:FF:000002">
    <property type="entry name" value="UvrABC system protein A"/>
    <property type="match status" value="1"/>
</dbReference>
<dbReference type="FunFam" id="3.40.50.300:FF:000028">
    <property type="entry name" value="UvrABC system protein A"/>
    <property type="match status" value="1"/>
</dbReference>
<dbReference type="Gene3D" id="1.10.8.280">
    <property type="entry name" value="ABC transporter ATPase domain-like"/>
    <property type="match status" value="1"/>
</dbReference>
<dbReference type="Gene3D" id="1.20.1580.10">
    <property type="entry name" value="ABC transporter ATPase like domain"/>
    <property type="match status" value="2"/>
</dbReference>
<dbReference type="Gene3D" id="3.30.1490.20">
    <property type="entry name" value="ATP-grasp fold, A domain"/>
    <property type="match status" value="1"/>
</dbReference>
<dbReference type="Gene3D" id="3.40.50.300">
    <property type="entry name" value="P-loop containing nucleotide triphosphate hydrolases"/>
    <property type="match status" value="2"/>
</dbReference>
<dbReference type="HAMAP" id="MF_00205">
    <property type="entry name" value="UvrA"/>
    <property type="match status" value="1"/>
</dbReference>
<dbReference type="InterPro" id="IPR003439">
    <property type="entry name" value="ABC_transporter-like_ATP-bd"/>
</dbReference>
<dbReference type="InterPro" id="IPR017871">
    <property type="entry name" value="ABC_transporter-like_CS"/>
</dbReference>
<dbReference type="InterPro" id="IPR013815">
    <property type="entry name" value="ATP_grasp_subdomain_1"/>
</dbReference>
<dbReference type="InterPro" id="IPR027417">
    <property type="entry name" value="P-loop_NTPase"/>
</dbReference>
<dbReference type="InterPro" id="IPR004602">
    <property type="entry name" value="UvrA"/>
</dbReference>
<dbReference type="InterPro" id="IPR041552">
    <property type="entry name" value="UvrA_DNA-bd"/>
</dbReference>
<dbReference type="InterPro" id="IPR041102">
    <property type="entry name" value="UvrA_inter"/>
</dbReference>
<dbReference type="NCBIfam" id="NF001503">
    <property type="entry name" value="PRK00349.1"/>
    <property type="match status" value="1"/>
</dbReference>
<dbReference type="NCBIfam" id="TIGR00630">
    <property type="entry name" value="uvra"/>
    <property type="match status" value="1"/>
</dbReference>
<dbReference type="PANTHER" id="PTHR43152">
    <property type="entry name" value="UVRABC SYSTEM PROTEIN A"/>
    <property type="match status" value="1"/>
</dbReference>
<dbReference type="PANTHER" id="PTHR43152:SF3">
    <property type="entry name" value="UVRABC SYSTEM PROTEIN A"/>
    <property type="match status" value="1"/>
</dbReference>
<dbReference type="Pfam" id="PF17755">
    <property type="entry name" value="UvrA_DNA-bind"/>
    <property type="match status" value="1"/>
</dbReference>
<dbReference type="Pfam" id="PF17760">
    <property type="entry name" value="UvrA_inter"/>
    <property type="match status" value="1"/>
</dbReference>
<dbReference type="SUPFAM" id="SSF52540">
    <property type="entry name" value="P-loop containing nucleoside triphosphate hydrolases"/>
    <property type="match status" value="2"/>
</dbReference>
<dbReference type="PROSITE" id="PS00211">
    <property type="entry name" value="ABC_TRANSPORTER_1"/>
    <property type="match status" value="2"/>
</dbReference>
<dbReference type="PROSITE" id="PS50893">
    <property type="entry name" value="ABC_TRANSPORTER_2"/>
    <property type="match status" value="1"/>
</dbReference>
<reference key="1">
    <citation type="journal article" date="2002" name="Lancet">
        <title>Genome and virulence determinants of high virulence community-acquired MRSA.</title>
        <authorList>
            <person name="Baba T."/>
            <person name="Takeuchi F."/>
            <person name="Kuroda M."/>
            <person name="Yuzawa H."/>
            <person name="Aoki K."/>
            <person name="Oguchi A."/>
            <person name="Nagai Y."/>
            <person name="Iwama N."/>
            <person name="Asano K."/>
            <person name="Naimi T."/>
            <person name="Kuroda H."/>
            <person name="Cui L."/>
            <person name="Yamamoto K."/>
            <person name="Hiramatsu K."/>
        </authorList>
    </citation>
    <scope>NUCLEOTIDE SEQUENCE [LARGE SCALE GENOMIC DNA]</scope>
    <source>
        <strain>MW2</strain>
    </source>
</reference>
<organism>
    <name type="scientific">Staphylococcus aureus (strain MW2)</name>
    <dbReference type="NCBI Taxonomy" id="196620"/>
    <lineage>
        <taxon>Bacteria</taxon>
        <taxon>Bacillati</taxon>
        <taxon>Bacillota</taxon>
        <taxon>Bacilli</taxon>
        <taxon>Bacillales</taxon>
        <taxon>Staphylococcaceae</taxon>
        <taxon>Staphylococcus</taxon>
    </lineage>
</organism>
<name>UVRA_STAAW</name>
<sequence length="948" mass="105368">MKEPSIVVKGARAHNLKDIDIELPKNKLIVMTGLSGSGKSSLAFDTIYAEGQRRYVESLSAYARQFLGQMDKPDVDTIEGLSPAISIDQKTTSKNPRSTVATVTEIYDYIRLLYARVGKPYCPNHNIEIESQTVQQMVDRIMELEARTKIQLLAPVIAHRKGSHEKLIEDIGKKGYVRLRIDGEIVDVNDVPTLDKNKNHTIEVVVDRLVVKDGIETRLADSIETALELSEGQLTVDVIDGEDLKFSESHACPICGFSIGELEPRMFSFNSPFGACPTCDGLGQKLTVDVDLVVPDKDKTLNEGAIEPWIPTSSDFYPTLLKRVCEVYKINMDKPFKKLTERQRDILLYGSGDKEIEFTFTQRQGGTRKRTMVFEGVVPNISRRFHESPSEYTREMMSKYMTELPCETCHGKRLSREALSVYVGGLNIGEVVEYSISQALNYYKNIDLSEQDQAIANQILKEIISRLTFLNNVGLEYLTLNRASGTLSGGEAQRIRLATQIGSRLTGVLYVLDEPSIGLHQRDNDRLINTLKEMRDLGNTLIVVEHDDDTMRAADYLVDIGPGAGEHGGQIVSSGTPQKVMKDKKSLTGQYLSGKKRIEVPEYRRPASDRKISIRGARSNNLKGVDVDIPLSIMTVVTGVSGSGKSSLVNEVLYKSLAQKINKSKVKPGLYDKIEGIDQLDKIIDIDQSPIGRTPRSNPATYTGVFDDIRDVFAQTNEAKIRGYQKGRFSFNVKGGRCEACKGDGIIKIEMHFLPDVYVPCEVCDGKRYNRETLEVTYKGKNIADILEMTVEEATQFFENIPKIKRKLQTLVDVGLGYVTLGQQATTLSGGEAQRVKLASELHKRSTGKSIYILDEPTTGLHVDDISRLLKVLNRLVENGDTVVIIEHNLDVIKTADYIIDLGPEGGSGGGTIVATGTPEDIAQTKSSYTGKYLKEVLERDKQNTEDK</sequence>
<comment type="function">
    <text evidence="1">The UvrABC repair system catalyzes the recognition and processing of DNA lesions. UvrA is an ATPase and a DNA-binding protein. A damage recognition complex composed of 2 UvrA and 2 UvrB subunits scans DNA for abnormalities. When the presence of a lesion has been verified by UvrB, the UvrA molecules dissociate.</text>
</comment>
<comment type="subunit">
    <text evidence="1">Forms a heterotetramer with UvrB during the search for lesions.</text>
</comment>
<comment type="subcellular location">
    <subcellularLocation>
        <location evidence="1">Cytoplasm</location>
    </subcellularLocation>
</comment>
<comment type="similarity">
    <text evidence="1">Belongs to the ABC transporter superfamily. UvrA family.</text>
</comment>